<feature type="chain" id="PRO_0000250941" description="NADH-quinone oxidoreductase subunit I 2">
    <location>
        <begin position="1"/>
        <end position="162"/>
    </location>
</feature>
<feature type="domain" description="4Fe-4S ferredoxin-type 1" evidence="1">
    <location>
        <begin position="52"/>
        <end position="82"/>
    </location>
</feature>
<feature type="domain" description="4Fe-4S ferredoxin-type 2" evidence="1">
    <location>
        <begin position="93"/>
        <end position="122"/>
    </location>
</feature>
<feature type="binding site" evidence="1">
    <location>
        <position position="62"/>
    </location>
    <ligand>
        <name>[4Fe-4S] cluster</name>
        <dbReference type="ChEBI" id="CHEBI:49883"/>
        <label>1</label>
    </ligand>
</feature>
<feature type="binding site" evidence="1">
    <location>
        <position position="65"/>
    </location>
    <ligand>
        <name>[4Fe-4S] cluster</name>
        <dbReference type="ChEBI" id="CHEBI:49883"/>
        <label>1</label>
    </ligand>
</feature>
<feature type="binding site" evidence="1">
    <location>
        <position position="68"/>
    </location>
    <ligand>
        <name>[4Fe-4S] cluster</name>
        <dbReference type="ChEBI" id="CHEBI:49883"/>
        <label>1</label>
    </ligand>
</feature>
<feature type="binding site" evidence="1">
    <location>
        <position position="72"/>
    </location>
    <ligand>
        <name>[4Fe-4S] cluster</name>
        <dbReference type="ChEBI" id="CHEBI:49883"/>
        <label>2</label>
    </ligand>
</feature>
<feature type="binding site" evidence="1">
    <location>
        <position position="102"/>
    </location>
    <ligand>
        <name>[4Fe-4S] cluster</name>
        <dbReference type="ChEBI" id="CHEBI:49883"/>
        <label>2</label>
    </ligand>
</feature>
<feature type="binding site" evidence="1">
    <location>
        <position position="105"/>
    </location>
    <ligand>
        <name>[4Fe-4S] cluster</name>
        <dbReference type="ChEBI" id="CHEBI:49883"/>
        <label>2</label>
    </ligand>
</feature>
<feature type="binding site" evidence="1">
    <location>
        <position position="108"/>
    </location>
    <ligand>
        <name>[4Fe-4S] cluster</name>
        <dbReference type="ChEBI" id="CHEBI:49883"/>
        <label>2</label>
    </ligand>
</feature>
<feature type="binding site" evidence="1">
    <location>
        <position position="112"/>
    </location>
    <ligand>
        <name>[4Fe-4S] cluster</name>
        <dbReference type="ChEBI" id="CHEBI:49883"/>
        <label>1</label>
    </ligand>
</feature>
<sequence length="162" mass="18714">MNINATARSLLLTEFVSAFFLAMRYFFKPKPTINYPFEKNPISPRFRGEHALRRYPNGEERCIACKLCEAICPAQAITIEAGPRRNDGTRRTVRYDIDMVKCIYCGLCQEACPVDAIVEGPNFEFATETREELYYDKARLLANGDRWEREIAKSIELDAPYR</sequence>
<comment type="function">
    <text evidence="1">NDH-1 shuttles electrons from NADH, via FMN and iron-sulfur (Fe-S) centers, to quinones in the respiratory chain. The immediate electron acceptor for the enzyme in this species is believed to be ubiquinone. Couples the redox reaction to proton translocation (for every two electrons transferred, four hydrogen ions are translocated across the cytoplasmic membrane), and thus conserves the redox energy in a proton gradient.</text>
</comment>
<comment type="catalytic activity">
    <reaction evidence="1">
        <text>a quinone + NADH + 5 H(+)(in) = a quinol + NAD(+) + 4 H(+)(out)</text>
        <dbReference type="Rhea" id="RHEA:57888"/>
        <dbReference type="ChEBI" id="CHEBI:15378"/>
        <dbReference type="ChEBI" id="CHEBI:24646"/>
        <dbReference type="ChEBI" id="CHEBI:57540"/>
        <dbReference type="ChEBI" id="CHEBI:57945"/>
        <dbReference type="ChEBI" id="CHEBI:132124"/>
    </reaction>
</comment>
<comment type="cofactor">
    <cofactor evidence="1">
        <name>[4Fe-4S] cluster</name>
        <dbReference type="ChEBI" id="CHEBI:49883"/>
    </cofactor>
    <text evidence="1">Binds 2 [4Fe-4S] clusters per subunit.</text>
</comment>
<comment type="subunit">
    <text evidence="1">NDH-1 is composed of 14 different subunits. Subunits NuoA, H, J, K, L, M, N constitute the membrane sector of the complex.</text>
</comment>
<comment type="subcellular location">
    <subcellularLocation>
        <location evidence="1">Cell inner membrane</location>
        <topology evidence="1">Peripheral membrane protein</topology>
    </subcellularLocation>
</comment>
<comment type="similarity">
    <text evidence="1">Belongs to the complex I 23 kDa subunit family.</text>
</comment>
<keyword id="KW-0004">4Fe-4S</keyword>
<keyword id="KW-0997">Cell inner membrane</keyword>
<keyword id="KW-1003">Cell membrane</keyword>
<keyword id="KW-0408">Iron</keyword>
<keyword id="KW-0411">Iron-sulfur</keyword>
<keyword id="KW-0472">Membrane</keyword>
<keyword id="KW-0479">Metal-binding</keyword>
<keyword id="KW-0520">NAD</keyword>
<keyword id="KW-0874">Quinone</keyword>
<keyword id="KW-1185">Reference proteome</keyword>
<keyword id="KW-0677">Repeat</keyword>
<keyword id="KW-1278">Translocase</keyword>
<keyword id="KW-0830">Ubiquinone</keyword>
<dbReference type="EC" id="7.1.1.-" evidence="1"/>
<dbReference type="EMBL" id="CP000250">
    <property type="protein sequence ID" value="ABD07285.1"/>
    <property type="molecule type" value="Genomic_DNA"/>
</dbReference>
<dbReference type="RefSeq" id="WP_011441470.1">
    <property type="nucleotide sequence ID" value="NC_007778.1"/>
</dbReference>
<dbReference type="SMR" id="Q2IWX5"/>
<dbReference type="STRING" id="316058.RPB_2582"/>
<dbReference type="KEGG" id="rpb:RPB_2582"/>
<dbReference type="eggNOG" id="COG1143">
    <property type="taxonomic scope" value="Bacteria"/>
</dbReference>
<dbReference type="HOGENOM" id="CLU_067218_5_1_5"/>
<dbReference type="OrthoDB" id="9808559at2"/>
<dbReference type="Proteomes" id="UP000008809">
    <property type="component" value="Chromosome"/>
</dbReference>
<dbReference type="GO" id="GO:0005886">
    <property type="term" value="C:plasma membrane"/>
    <property type="evidence" value="ECO:0007669"/>
    <property type="project" value="UniProtKB-SubCell"/>
</dbReference>
<dbReference type="GO" id="GO:0051539">
    <property type="term" value="F:4 iron, 4 sulfur cluster binding"/>
    <property type="evidence" value="ECO:0007669"/>
    <property type="project" value="UniProtKB-KW"/>
</dbReference>
<dbReference type="GO" id="GO:0005506">
    <property type="term" value="F:iron ion binding"/>
    <property type="evidence" value="ECO:0007669"/>
    <property type="project" value="UniProtKB-UniRule"/>
</dbReference>
<dbReference type="GO" id="GO:0050136">
    <property type="term" value="F:NADH:ubiquinone reductase (non-electrogenic) activity"/>
    <property type="evidence" value="ECO:0007669"/>
    <property type="project" value="UniProtKB-UniRule"/>
</dbReference>
<dbReference type="GO" id="GO:0048038">
    <property type="term" value="F:quinone binding"/>
    <property type="evidence" value="ECO:0007669"/>
    <property type="project" value="UniProtKB-KW"/>
</dbReference>
<dbReference type="GO" id="GO:0009060">
    <property type="term" value="P:aerobic respiration"/>
    <property type="evidence" value="ECO:0007669"/>
    <property type="project" value="TreeGrafter"/>
</dbReference>
<dbReference type="FunFam" id="3.30.70.3270:FF:000001">
    <property type="entry name" value="NADH-quinone oxidoreductase subunit I 1"/>
    <property type="match status" value="1"/>
</dbReference>
<dbReference type="Gene3D" id="3.30.70.3270">
    <property type="match status" value="1"/>
</dbReference>
<dbReference type="HAMAP" id="MF_01351">
    <property type="entry name" value="NDH1_NuoI"/>
    <property type="match status" value="1"/>
</dbReference>
<dbReference type="InterPro" id="IPR017896">
    <property type="entry name" value="4Fe4S_Fe-S-bd"/>
</dbReference>
<dbReference type="InterPro" id="IPR017900">
    <property type="entry name" value="4Fe4S_Fe_S_CS"/>
</dbReference>
<dbReference type="InterPro" id="IPR010226">
    <property type="entry name" value="NADH_quinone_OxRdtase_chainI"/>
</dbReference>
<dbReference type="NCBIfam" id="TIGR01971">
    <property type="entry name" value="NuoI"/>
    <property type="match status" value="1"/>
</dbReference>
<dbReference type="NCBIfam" id="NF004538">
    <property type="entry name" value="PRK05888.1-4"/>
    <property type="match status" value="1"/>
</dbReference>
<dbReference type="NCBIfam" id="NF004539">
    <property type="entry name" value="PRK05888.1-5"/>
    <property type="match status" value="1"/>
</dbReference>
<dbReference type="PANTHER" id="PTHR10849:SF20">
    <property type="entry name" value="NADH DEHYDROGENASE [UBIQUINONE] IRON-SULFUR PROTEIN 8, MITOCHONDRIAL"/>
    <property type="match status" value="1"/>
</dbReference>
<dbReference type="PANTHER" id="PTHR10849">
    <property type="entry name" value="NADH DEHYDROGENASE UBIQUINONE IRON-SULFUR PROTEIN 8, MITOCHONDRIAL"/>
    <property type="match status" value="1"/>
</dbReference>
<dbReference type="Pfam" id="PF12838">
    <property type="entry name" value="Fer4_7"/>
    <property type="match status" value="1"/>
</dbReference>
<dbReference type="SUPFAM" id="SSF54862">
    <property type="entry name" value="4Fe-4S ferredoxins"/>
    <property type="match status" value="1"/>
</dbReference>
<dbReference type="PROSITE" id="PS00198">
    <property type="entry name" value="4FE4S_FER_1"/>
    <property type="match status" value="2"/>
</dbReference>
<dbReference type="PROSITE" id="PS51379">
    <property type="entry name" value="4FE4S_FER_2"/>
    <property type="match status" value="2"/>
</dbReference>
<proteinExistence type="inferred from homology"/>
<reference key="1">
    <citation type="submission" date="2006-01" db="EMBL/GenBank/DDBJ databases">
        <title>Complete sequence of Rhodopseudomonas palustris HaA2.</title>
        <authorList>
            <consortium name="US DOE Joint Genome Institute"/>
            <person name="Copeland A."/>
            <person name="Lucas S."/>
            <person name="Lapidus A."/>
            <person name="Barry K."/>
            <person name="Detter J.C."/>
            <person name="Glavina T."/>
            <person name="Hammon N."/>
            <person name="Israni S."/>
            <person name="Pitluck S."/>
            <person name="Chain P."/>
            <person name="Malfatti S."/>
            <person name="Shin M."/>
            <person name="Vergez L."/>
            <person name="Schmutz J."/>
            <person name="Larimer F."/>
            <person name="Land M."/>
            <person name="Hauser L."/>
            <person name="Pelletier D.A."/>
            <person name="Kyrpides N."/>
            <person name="Anderson I."/>
            <person name="Oda Y."/>
            <person name="Harwood C.S."/>
            <person name="Richardson P."/>
        </authorList>
    </citation>
    <scope>NUCLEOTIDE SEQUENCE [LARGE SCALE GENOMIC DNA]</scope>
    <source>
        <strain>HaA2</strain>
    </source>
</reference>
<evidence type="ECO:0000255" key="1">
    <source>
        <dbReference type="HAMAP-Rule" id="MF_01351"/>
    </source>
</evidence>
<gene>
    <name evidence="1" type="primary">nuoI2</name>
    <name type="ordered locus">RPB_2582</name>
</gene>
<organism>
    <name type="scientific">Rhodopseudomonas palustris (strain HaA2)</name>
    <dbReference type="NCBI Taxonomy" id="316058"/>
    <lineage>
        <taxon>Bacteria</taxon>
        <taxon>Pseudomonadati</taxon>
        <taxon>Pseudomonadota</taxon>
        <taxon>Alphaproteobacteria</taxon>
        <taxon>Hyphomicrobiales</taxon>
        <taxon>Nitrobacteraceae</taxon>
        <taxon>Rhodopseudomonas</taxon>
    </lineage>
</organism>
<name>NUOI2_RHOP2</name>
<protein>
    <recommendedName>
        <fullName evidence="1">NADH-quinone oxidoreductase subunit I 2</fullName>
        <ecNumber evidence="1">7.1.1.-</ecNumber>
    </recommendedName>
    <alternativeName>
        <fullName evidence="1">NADH dehydrogenase I subunit I 2</fullName>
    </alternativeName>
    <alternativeName>
        <fullName evidence="1">NDH-1 subunit I 2</fullName>
    </alternativeName>
</protein>
<accession>Q2IWX5</accession>